<protein>
    <recommendedName>
        <fullName evidence="1">Anamorsin homolog</fullName>
    </recommendedName>
    <alternativeName>
        <fullName evidence="1">Fe-S cluster assembly protein DRE2 homolog</fullName>
    </alternativeName>
</protein>
<evidence type="ECO:0000255" key="1">
    <source>
        <dbReference type="HAMAP-Rule" id="MF_03115"/>
    </source>
</evidence>
<evidence type="ECO:0000305" key="2"/>
<organism>
    <name type="scientific">Plasmodium yoelii yoelii</name>
    <dbReference type="NCBI Taxonomy" id="73239"/>
    <lineage>
        <taxon>Eukaryota</taxon>
        <taxon>Sar</taxon>
        <taxon>Alveolata</taxon>
        <taxon>Apicomplexa</taxon>
        <taxon>Aconoidasida</taxon>
        <taxon>Haemosporida</taxon>
        <taxon>Plasmodiidae</taxon>
        <taxon>Plasmodium</taxon>
        <taxon>Plasmodium (Vinckeia)</taxon>
    </lineage>
</organism>
<name>DRE2_PLAYO</name>
<proteinExistence type="inferred from homology"/>
<comment type="function">
    <text evidence="1">Component of the cytosolic iron-sulfur (Fe-S) protein assembly (CIA) machinery. Required for the maturation of extramitochondrial Fe-S proteins. Part of an electron transfer chain functioning in an early step of cytosolic Fe-S biogenesis, facilitating the de novo assembly of a [4Fe-4S] cluster on the cytosolic Fe-S scaffold complex. Electrons are transferred from NADPH via a FAD- and FMN-containing diflavin oxidoreductase. Together with the diflavin oxidoreductase, also required for the assembly of the diferric tyrosyl radical cofactor of ribonucleotide reductase (RNR), probably by providing electrons for reduction during radical cofactor maturation in the catalytic small subunit.</text>
</comment>
<comment type="cofactor">
    <cofactor evidence="1">
        <name>[2Fe-2S] cluster</name>
        <dbReference type="ChEBI" id="CHEBI:190135"/>
    </cofactor>
</comment>
<comment type="cofactor">
    <cofactor evidence="1">
        <name>[4Fe-4S] cluster</name>
        <dbReference type="ChEBI" id="CHEBI:49883"/>
    </cofactor>
</comment>
<comment type="subunit">
    <text evidence="1">Monomer.</text>
</comment>
<comment type="subcellular location">
    <subcellularLocation>
        <location evidence="1">Cytoplasm</location>
    </subcellularLocation>
    <subcellularLocation>
        <location evidence="1">Mitochondrion intermembrane space</location>
    </subcellularLocation>
</comment>
<comment type="domain">
    <text evidence="1">The C-terminal domain binds 2 Fe-S clusters but is otherwise mostly in an intrinsically disordered conformation.</text>
</comment>
<comment type="domain">
    <text evidence="1">The N-terminal domain has structural similarity with S-adenosyl-L-methionine-dependent methyltransferases, but does not bind S-adenosyl-L-methionine. It is required for correct assembly of the 2 Fe-S clusters.</text>
</comment>
<comment type="domain">
    <text evidence="1">The twin Cx2C motifs are involved in the recognition by the mitochondrial MIA40-ERV1 disulfide relay system. The formation of 2 disulfide bonds in the Cx2C motifs through dithiol/disulfide exchange reactions effectively traps the protein in the mitochondrial intermembrane space.</text>
</comment>
<comment type="similarity">
    <text evidence="1">Belongs to the anamorsin family.</text>
</comment>
<comment type="sequence caution" evidence="2">
    <conflict type="erroneous gene model prediction">
        <sequence resource="EMBL-CDS" id="EAA22656"/>
    </conflict>
</comment>
<dbReference type="EMBL" id="AABL01000882">
    <property type="protein sequence ID" value="EAA22656.1"/>
    <property type="status" value="ALT_SEQ"/>
    <property type="molecule type" value="Genomic_DNA"/>
</dbReference>
<dbReference type="SMR" id="Q7RJY1"/>
<dbReference type="STRING" id="73239.Q7RJY1"/>
<dbReference type="PaxDb" id="73239-Q7RJY1"/>
<dbReference type="EnsemblProtists" id="EAA22656">
    <property type="protein sequence ID" value="EAA22656"/>
    <property type="gene ID" value="EAA22656"/>
</dbReference>
<dbReference type="VEuPathDB" id="PlasmoDB:Py17XNL_000704154"/>
<dbReference type="InParanoid" id="Q7RJY1"/>
<dbReference type="Proteomes" id="UP000008553">
    <property type="component" value="Unassembled WGS sequence"/>
</dbReference>
<dbReference type="GO" id="GO:0005758">
    <property type="term" value="C:mitochondrial intermembrane space"/>
    <property type="evidence" value="ECO:0007669"/>
    <property type="project" value="UniProtKB-SubCell"/>
</dbReference>
<dbReference type="GO" id="GO:0051537">
    <property type="term" value="F:2 iron, 2 sulfur cluster binding"/>
    <property type="evidence" value="ECO:0007669"/>
    <property type="project" value="UniProtKB-UniRule"/>
</dbReference>
<dbReference type="GO" id="GO:0051539">
    <property type="term" value="F:4 iron, 4 sulfur cluster binding"/>
    <property type="evidence" value="ECO:0007669"/>
    <property type="project" value="UniProtKB-KW"/>
</dbReference>
<dbReference type="GO" id="GO:0009055">
    <property type="term" value="F:electron transfer activity"/>
    <property type="evidence" value="ECO:0007669"/>
    <property type="project" value="UniProtKB-UniRule"/>
</dbReference>
<dbReference type="GO" id="GO:0046872">
    <property type="term" value="F:metal ion binding"/>
    <property type="evidence" value="ECO:0007669"/>
    <property type="project" value="UniProtKB-KW"/>
</dbReference>
<dbReference type="GO" id="GO:0016226">
    <property type="term" value="P:iron-sulfur cluster assembly"/>
    <property type="evidence" value="ECO:0007669"/>
    <property type="project" value="UniProtKB-UniRule"/>
</dbReference>
<dbReference type="HAMAP" id="MF_03115">
    <property type="entry name" value="Anamorsin"/>
    <property type="match status" value="1"/>
</dbReference>
<dbReference type="InterPro" id="IPR007785">
    <property type="entry name" value="Anamorsin"/>
</dbReference>
<dbReference type="InterPro" id="IPR046408">
    <property type="entry name" value="CIAPIN1"/>
</dbReference>
<dbReference type="PANTHER" id="PTHR13273">
    <property type="entry name" value="ANAMORSIN"/>
    <property type="match status" value="1"/>
</dbReference>
<dbReference type="PANTHER" id="PTHR13273:SF14">
    <property type="entry name" value="ANAMORSIN"/>
    <property type="match status" value="1"/>
</dbReference>
<dbReference type="Pfam" id="PF05093">
    <property type="entry name" value="CIAPIN1"/>
    <property type="match status" value="1"/>
</dbReference>
<reference key="1">
    <citation type="journal article" date="2002" name="Nature">
        <title>Genome sequence and comparative analysis of the model rodent malaria parasite Plasmodium yoelii yoelii.</title>
        <authorList>
            <person name="Carlton J.M."/>
            <person name="Angiuoli S.V."/>
            <person name="Suh B.B."/>
            <person name="Kooij T.W."/>
            <person name="Pertea M."/>
            <person name="Silva J.C."/>
            <person name="Ermolaeva M.D."/>
            <person name="Allen J.E."/>
            <person name="Selengut J.D."/>
            <person name="Koo H.L."/>
            <person name="Peterson J.D."/>
            <person name="Pop M."/>
            <person name="Kosack D.S."/>
            <person name="Shumway M.F."/>
            <person name="Bidwell S.L."/>
            <person name="Shallom S.J."/>
            <person name="van Aken S.E."/>
            <person name="Riedmuller S.B."/>
            <person name="Feldblyum T.V."/>
            <person name="Cho J.K."/>
            <person name="Quackenbush J."/>
            <person name="Sedegah M."/>
            <person name="Shoaibi A."/>
            <person name="Cummings L.M."/>
            <person name="Florens L."/>
            <person name="Yates J.R. III"/>
            <person name="Raine J.D."/>
            <person name="Sinden R.E."/>
            <person name="Harris M.A."/>
            <person name="Cunningham D.A."/>
            <person name="Preiser P.R."/>
            <person name="Bergman L.W."/>
            <person name="Vaidya A.B."/>
            <person name="van Lin L.H."/>
            <person name="Janse C.J."/>
            <person name="Waters A.P."/>
            <person name="Smith H.O."/>
            <person name="White O.R."/>
            <person name="Salzberg S.L."/>
            <person name="Venter J.C."/>
            <person name="Fraser C.M."/>
            <person name="Hoffman S.L."/>
            <person name="Gardner M.J."/>
            <person name="Carucci D.J."/>
        </authorList>
    </citation>
    <scope>NUCLEOTIDE SEQUENCE [LARGE SCALE GENOMIC DNA]</scope>
    <source>
        <strain>17XNL</strain>
    </source>
</reference>
<gene>
    <name type="ORF">PY03124</name>
</gene>
<accession>Q7RJY1</accession>
<feature type="chain" id="PRO_0000392359" description="Anamorsin homolog">
    <location>
        <begin position="1"/>
        <end position="251"/>
    </location>
</feature>
<feature type="region of interest" description="N-terminal SAM-like domain" evidence="1">
    <location>
        <begin position="1"/>
        <end position="154"/>
    </location>
</feature>
<feature type="region of interest" description="Linker" evidence="1">
    <location>
        <begin position="155"/>
        <end position="167"/>
    </location>
</feature>
<feature type="region of interest" description="Fe-S binding site A" evidence="1">
    <location>
        <begin position="170"/>
        <end position="186"/>
    </location>
</feature>
<feature type="region of interest" description="Fe-S binding site B" evidence="1">
    <location>
        <begin position="216"/>
        <end position="230"/>
    </location>
</feature>
<feature type="short sequence motif" description="Cx2C motif 1" evidence="1">
    <location>
        <begin position="216"/>
        <end position="219"/>
    </location>
</feature>
<feature type="short sequence motif" description="Cx2C motif 2" evidence="1">
    <location>
        <begin position="227"/>
        <end position="230"/>
    </location>
</feature>
<feature type="binding site" evidence="1">
    <location>
        <position position="170"/>
    </location>
    <ligand>
        <name>[2Fe-2S] cluster</name>
        <dbReference type="ChEBI" id="CHEBI:190135"/>
    </ligand>
</feature>
<feature type="binding site" evidence="1">
    <location>
        <position position="181"/>
    </location>
    <ligand>
        <name>[2Fe-2S] cluster</name>
        <dbReference type="ChEBI" id="CHEBI:190135"/>
    </ligand>
</feature>
<feature type="binding site" evidence="1">
    <location>
        <position position="184"/>
    </location>
    <ligand>
        <name>[2Fe-2S] cluster</name>
        <dbReference type="ChEBI" id="CHEBI:190135"/>
    </ligand>
</feature>
<feature type="binding site" evidence="1">
    <location>
        <position position="186"/>
    </location>
    <ligand>
        <name>[2Fe-2S] cluster</name>
        <dbReference type="ChEBI" id="CHEBI:190135"/>
    </ligand>
</feature>
<feature type="binding site" evidence="1">
    <location>
        <position position="216"/>
    </location>
    <ligand>
        <name>[4Fe-4S] cluster</name>
        <dbReference type="ChEBI" id="CHEBI:49883"/>
    </ligand>
</feature>
<feature type="binding site" evidence="1">
    <location>
        <position position="219"/>
    </location>
    <ligand>
        <name>[4Fe-4S] cluster</name>
        <dbReference type="ChEBI" id="CHEBI:49883"/>
    </ligand>
</feature>
<feature type="binding site" evidence="1">
    <location>
        <position position="227"/>
    </location>
    <ligand>
        <name>[4Fe-4S] cluster</name>
        <dbReference type="ChEBI" id="CHEBI:49883"/>
    </ligand>
</feature>
<feature type="binding site" evidence="1">
    <location>
        <position position="230"/>
    </location>
    <ligand>
        <name>[4Fe-4S] cluster</name>
        <dbReference type="ChEBI" id="CHEBI:49883"/>
    </ligand>
</feature>
<sequence>MINFSNTLVILNNDVPCELLKKKYSELLIPTISILDFKKKKIYKKYNNIFLYSYQNYSFLLDLNDNILLKIQKYLNKNGILDINLYLNDKNNNNNSGTNKKDHSKIEDISQILKKLRKECLYNGYINISTEQTTSENGIVINIKAENPDFNKSDDDNNLVSSDEEIYEKCEDKKKVVNRVCDNCTCGKKEKAMNLEKIKINDNEVEYSTENVVSSCGNCYLGDAFRCGSCPYKGLPAFQPGENVKLNLNVC</sequence>
<keyword id="KW-0001">2Fe-2S</keyword>
<keyword id="KW-0004">4Fe-4S</keyword>
<keyword id="KW-0963">Cytoplasm</keyword>
<keyword id="KW-0408">Iron</keyword>
<keyword id="KW-0411">Iron-sulfur</keyword>
<keyword id="KW-0479">Metal-binding</keyword>
<keyword id="KW-0496">Mitochondrion</keyword>
<keyword id="KW-1185">Reference proteome</keyword>